<sequence length="71" mass="8051">ADNRRPIWVMGHMVNSLAQIDEFVNLGANSIETDVSFDRNCQVLVVFDLKTGHRWQFGGITNKVLNEAAYK</sequence>
<organism>
    <name type="scientific">Loxosceles gaucho</name>
    <name type="common">Spider</name>
    <dbReference type="NCBI Taxonomy" id="58216"/>
    <lineage>
        <taxon>Eukaryota</taxon>
        <taxon>Metazoa</taxon>
        <taxon>Ecdysozoa</taxon>
        <taxon>Arthropoda</taxon>
        <taxon>Chelicerata</taxon>
        <taxon>Arachnida</taxon>
        <taxon>Araneae</taxon>
        <taxon>Araneomorphae</taxon>
        <taxon>Haplogynae</taxon>
        <taxon>Scytodoidea</taxon>
        <taxon>Sicariidae</taxon>
        <taxon>Loxosceles</taxon>
    </lineage>
</organism>
<feature type="chain" id="PRO_0000087678" description="Dermonecrotic toxin LgSicTox-alphaI-Loxn-A">
    <location>
        <begin position="1"/>
        <end position="71" status="greater than"/>
    </location>
</feature>
<feature type="active site" evidence="6">
    <location>
        <position position="12"/>
    </location>
</feature>
<feature type="binding site" evidence="6">
    <location>
        <position position="32"/>
    </location>
    <ligand>
        <name>Mg(2+)</name>
        <dbReference type="ChEBI" id="CHEBI:18420"/>
    </ligand>
</feature>
<feature type="binding site" evidence="6">
    <location>
        <position position="34"/>
    </location>
    <ligand>
        <name>Mg(2+)</name>
        <dbReference type="ChEBI" id="CHEBI:18420"/>
    </ligand>
</feature>
<feature type="binding site" evidence="6">
    <location>
        <position position="48"/>
    </location>
    <ligand>
        <name>Mg(2+)</name>
        <dbReference type="ChEBI" id="CHEBI:18420"/>
    </ligand>
</feature>
<feature type="unsure residue" description="Q or K">
    <location>
        <position position="42"/>
    </location>
</feature>
<feature type="unsure residue" description="L or I">
    <location>
        <position position="44"/>
    </location>
</feature>
<feature type="unsure residue" description="L or I">
    <location>
        <position position="49"/>
    </location>
</feature>
<feature type="unsure residue" description="Assigned by comparison with orthologs">
    <location>
        <position position="55"/>
    </location>
</feature>
<feature type="unsure residue" description="Q or K">
    <location>
        <position position="56"/>
    </location>
</feature>
<feature type="unsure residue" description="I or L">
    <location>
        <position position="60"/>
    </location>
</feature>
<feature type="unsure residue" description="K or Q">
    <location>
        <position position="63"/>
    </location>
</feature>
<feature type="unsure residue" description="L or I">
    <location>
        <position position="65"/>
    </location>
</feature>
<feature type="unsure residue" description="K or Q">
    <location>
        <position position="71"/>
    </location>
</feature>
<feature type="non-consecutive residues" evidence="9">
    <location>
        <begin position="38"/>
        <end position="39"/>
    </location>
</feature>
<feature type="non-consecutive residues" evidence="9">
    <location>
        <begin position="41"/>
        <end position="42"/>
    </location>
</feature>
<feature type="non-consecutive residues" evidence="9">
    <location>
        <begin position="50"/>
        <end position="51"/>
    </location>
</feature>
<feature type="non-consecutive residues" evidence="9">
    <location>
        <begin position="61"/>
        <end position="62"/>
    </location>
</feature>
<feature type="non-terminal residue">
    <location>
        <position position="71"/>
    </location>
</feature>
<dbReference type="EC" id="4.6.1.-" evidence="5"/>
<dbReference type="SMR" id="P69502"/>
<dbReference type="ArachnoServer" id="AS000157">
    <property type="toxin name" value="Sphingomyelinase D (Loxonecrogin-A) (N-terminal fragment)"/>
</dbReference>
<dbReference type="GO" id="GO:0005576">
    <property type="term" value="C:extracellular region"/>
    <property type="evidence" value="ECO:0007669"/>
    <property type="project" value="UniProtKB-SubCell"/>
</dbReference>
<dbReference type="GO" id="GO:0016829">
    <property type="term" value="F:lyase activity"/>
    <property type="evidence" value="ECO:0007669"/>
    <property type="project" value="UniProtKB-KW"/>
</dbReference>
<dbReference type="GO" id="GO:0046872">
    <property type="term" value="F:metal ion binding"/>
    <property type="evidence" value="ECO:0007669"/>
    <property type="project" value="UniProtKB-KW"/>
</dbReference>
<dbReference type="GO" id="GO:0008081">
    <property type="term" value="F:phosphoric diester hydrolase activity"/>
    <property type="evidence" value="ECO:0007669"/>
    <property type="project" value="InterPro"/>
</dbReference>
<dbReference type="GO" id="GO:0090729">
    <property type="term" value="F:toxin activity"/>
    <property type="evidence" value="ECO:0007669"/>
    <property type="project" value="UniProtKB-KW"/>
</dbReference>
<dbReference type="GO" id="GO:0031640">
    <property type="term" value="P:killing of cells of another organism"/>
    <property type="evidence" value="ECO:0007669"/>
    <property type="project" value="UniProtKB-KW"/>
</dbReference>
<dbReference type="GO" id="GO:0016042">
    <property type="term" value="P:lipid catabolic process"/>
    <property type="evidence" value="ECO:0007669"/>
    <property type="project" value="UniProtKB-KW"/>
</dbReference>
<dbReference type="Gene3D" id="3.20.20.190">
    <property type="entry name" value="Phosphatidylinositol (PI) phosphodiesterase"/>
    <property type="match status" value="1"/>
</dbReference>
<dbReference type="InterPro" id="IPR017946">
    <property type="entry name" value="PLC-like_Pdiesterase_TIM-brl"/>
</dbReference>
<reference key="1">
    <citation type="journal article" date="2003" name="J. Protein Chem.">
        <title>Purification and characterization of loxnecrogin, a dermonecrotic toxin from Loxosceles gaucho brown spider venom.</title>
        <authorList>
            <person name="Cunha R.B."/>
            <person name="Barbaro K.C."/>
            <person name="Muramatsu D."/>
            <person name="Portaro F.C.V."/>
            <person name="Fontes W."/>
            <person name="de Sousa M.V."/>
        </authorList>
    </citation>
    <scope>PROTEIN SEQUENCE</scope>
    <scope>FUNCTION</scope>
    <scope>MASS SPECTROMETRY</scope>
    <scope>SUBCELLULAR LOCATION</scope>
    <source>
        <tissue>Venom</tissue>
    </source>
</reference>
<accession>P69502</accession>
<proteinExistence type="evidence at protein level"/>
<comment type="function">
    <text evidence="1 7">Catalyzes the hydrolysis of sphingomyelin (By similarity). May also act on other phosphatidyl esters (By similarity).</text>
</comment>
<comment type="function">
    <text evidence="2 4 7">Dermonecrotic toxins cleave the phosphodiester linkage between the phosphate and headgroup of certain phospholipids (sphingolipid and lysolipid substrates), forming an alcohol (often choline) and a cyclic phosphate (By similarity). This toxin acts on sphingomyelin (SM) (By similarity). It may also act on ceramide phosphoethanolamine (CPE), lysophosphatidylcholine (LPC) and lysophosphatidylethanolamine (LPE), but not on lysophosphatidylserine (LPS), and lysophosphatidylglycerol (LPG) (By similarity). It acts by transphosphatidylation, releasing exclusively cyclic phosphate products as second products (By similarity). In vivo, induces dermonecrosis, but is not lethal (PubMed:12760418). Induces hemolysis, vascular permeability, edema, inflammatory response, and platelet aggregation (By similarity).</text>
</comment>
<comment type="catalytic activity">
    <reaction evidence="2">
        <text>an N-(acyl)-sphingosylphosphocholine = an N-(acyl)-sphingosyl-1,3-cyclic phosphate + choline</text>
        <dbReference type="Rhea" id="RHEA:60652"/>
        <dbReference type="ChEBI" id="CHEBI:15354"/>
        <dbReference type="ChEBI" id="CHEBI:64583"/>
        <dbReference type="ChEBI" id="CHEBI:143892"/>
    </reaction>
</comment>
<comment type="catalytic activity">
    <reaction evidence="2">
        <text>an N-(acyl)-sphingosylphosphoethanolamine = an N-(acyl)-sphingosyl-1,3-cyclic phosphate + ethanolamine</text>
        <dbReference type="Rhea" id="RHEA:60648"/>
        <dbReference type="ChEBI" id="CHEBI:57603"/>
        <dbReference type="ChEBI" id="CHEBI:143891"/>
        <dbReference type="ChEBI" id="CHEBI:143892"/>
    </reaction>
</comment>
<comment type="catalytic activity">
    <reaction evidence="2">
        <text>a 1-acyl-sn-glycero-3-phosphocholine = a 1-acyl-sn-glycero-2,3-cyclic phosphate + choline</text>
        <dbReference type="Rhea" id="RHEA:60700"/>
        <dbReference type="ChEBI" id="CHEBI:15354"/>
        <dbReference type="ChEBI" id="CHEBI:58168"/>
        <dbReference type="ChEBI" id="CHEBI:143947"/>
    </reaction>
</comment>
<comment type="catalytic activity">
    <reaction evidence="2">
        <text>a 1-acyl-sn-glycero-3-phosphoethanolamine = a 1-acyl-sn-glycero-2,3-cyclic phosphate + ethanolamine</text>
        <dbReference type="Rhea" id="RHEA:60704"/>
        <dbReference type="ChEBI" id="CHEBI:57603"/>
        <dbReference type="ChEBI" id="CHEBI:64381"/>
        <dbReference type="ChEBI" id="CHEBI:143947"/>
    </reaction>
</comment>
<comment type="cofactor">
    <cofactor evidence="6">
        <name>Mg(2+)</name>
        <dbReference type="ChEBI" id="CHEBI:18420"/>
    </cofactor>
    <text evidence="6">Binds 1 Mg(2+) ion per subunit.</text>
</comment>
<comment type="subcellular location">
    <subcellularLocation>
        <location evidence="7">Secreted</location>
    </subcellularLocation>
</comment>
<comment type="tissue specificity">
    <text evidence="10">Expressed by the venom gland.</text>
</comment>
<comment type="PTM">
    <text evidence="4">Contains 2 disulfide bonds.</text>
</comment>
<comment type="mass spectrometry" mass="31444.0" error="3.0" method="Electrospray" evidence="7"/>
<comment type="similarity">
    <text evidence="9">Belongs to the arthropod phospholipase D family. Class II subfamily.</text>
</comment>
<comment type="caution">
    <text evidence="2 3 5">The most common activity assay for dermonecrotic toxins detects enzymatic activity by monitoring choline release from substrate. Liberation of choline from sphingomyelin (SM) or lysophosphatidylcholine (LPC) is commonly assumed to result from substrate hydrolysis, giving either ceramide-1-phosphate (C1P) or lysophosphatidic acid (LPA), respectively, as a second product. However, two studies from Lajoie and colleagues (2013 and 2015) report the observation of exclusive formation of cyclic phosphate products as second products, resulting from intramolecular transphosphatidylation. Cyclic phosphates have vastly different biological properties from their monoester counterparts, and they may be relevant to the pathology of brown spider envenomation.</text>
</comment>
<evidence type="ECO:0000250" key="1"/>
<evidence type="ECO:0000250" key="2">
    <source>
        <dbReference type="UniProtKB" id="A0A0D4WTV1"/>
    </source>
</evidence>
<evidence type="ECO:0000250" key="3">
    <source>
        <dbReference type="UniProtKB" id="A0A0D4WV12"/>
    </source>
</evidence>
<evidence type="ECO:0000250" key="4">
    <source>
        <dbReference type="UniProtKB" id="P0CE80"/>
    </source>
</evidence>
<evidence type="ECO:0000250" key="5">
    <source>
        <dbReference type="UniProtKB" id="Q4ZFU2"/>
    </source>
</evidence>
<evidence type="ECO:0000250" key="6">
    <source>
        <dbReference type="UniProtKB" id="Q8I914"/>
    </source>
</evidence>
<evidence type="ECO:0000269" key="7">
    <source>
    </source>
</evidence>
<evidence type="ECO:0000303" key="8">
    <source>
    </source>
</evidence>
<evidence type="ECO:0000305" key="9"/>
<evidence type="ECO:0000305" key="10">
    <source>
    </source>
</evidence>
<keyword id="KW-0204">Cytolysis</keyword>
<keyword id="KW-1061">Dermonecrotic toxin</keyword>
<keyword id="KW-0903">Direct protein sequencing</keyword>
<keyword id="KW-1015">Disulfide bond</keyword>
<keyword id="KW-0354">Hemolysis</keyword>
<keyword id="KW-0442">Lipid degradation</keyword>
<keyword id="KW-0443">Lipid metabolism</keyword>
<keyword id="KW-0456">Lyase</keyword>
<keyword id="KW-0460">Magnesium</keyword>
<keyword id="KW-0479">Metal-binding</keyword>
<keyword id="KW-0964">Secreted</keyword>
<keyword id="KW-0800">Toxin</keyword>
<name>A1XA_LOXGA</name>
<protein>
    <recommendedName>
        <fullName>Dermonecrotic toxin LgSicTox-alphaI-Loxn-A</fullName>
        <ecNumber evidence="5">4.6.1.-</ecNumber>
    </recommendedName>
    <alternativeName>
        <fullName evidence="8">Loxnecrogin-A</fullName>
    </alternativeName>
    <alternativeName>
        <fullName>Phospholipase D</fullName>
        <shortName>PLD</shortName>
    </alternativeName>
    <alternativeName>
        <fullName>Sphingomyelin phosphodiesterase D</fullName>
        <shortName>SMD</shortName>
        <shortName>SMase D</shortName>
        <shortName>Sphingomyelinase D</shortName>
    </alternativeName>
</protein>